<gene>
    <name type="primary">IL1R2</name>
    <name type="synonym">IL1RB</name>
</gene>
<feature type="signal peptide" evidence="1">
    <location>
        <begin position="1"/>
        <end position="13"/>
    </location>
</feature>
<feature type="chain" id="PRO_0000015439" description="Interleukin-1 receptor type 2, membrane form">
    <location>
        <begin position="14"/>
        <end position="398"/>
    </location>
</feature>
<feature type="chain" id="PRO_0000415348" description="Interleukin-1 receptor type 2, soluble form">
    <location>
        <begin position="14"/>
        <end status="unknown"/>
    </location>
</feature>
<feature type="topological domain" description="Extracellular" evidence="1">
    <location>
        <begin position="14"/>
        <end position="343"/>
    </location>
</feature>
<feature type="transmembrane region" description="Helical" evidence="1">
    <location>
        <begin position="344"/>
        <end position="369"/>
    </location>
</feature>
<feature type="topological domain" description="Cytoplasmic" evidence="1">
    <location>
        <begin position="370"/>
        <end position="398"/>
    </location>
</feature>
<feature type="domain" description="Ig-like C2-type 1">
    <location>
        <begin position="18"/>
        <end position="124"/>
    </location>
</feature>
<feature type="domain" description="Ig-like C2-type 2">
    <location>
        <begin position="134"/>
        <end position="223"/>
    </location>
</feature>
<feature type="domain" description="Ig-like C2-type 3">
    <location>
        <begin position="237"/>
        <end position="349"/>
    </location>
</feature>
<feature type="region of interest" description="Contains proteolytic cleavage site" evidence="12">
    <location>
        <begin position="329"/>
        <end position="343"/>
    </location>
</feature>
<feature type="glycosylation site" description="N-linked (GlcNAc...) asparagine" evidence="1">
    <location>
        <position position="66"/>
    </location>
</feature>
<feature type="glycosylation site" description="N-linked (GlcNAc...) asparagine" evidence="1">
    <location>
        <position position="72"/>
    </location>
</feature>
<feature type="glycosylation site" description="N-linked (GlcNAc...) asparagine" evidence="5">
    <location>
        <position position="112"/>
    </location>
</feature>
<feature type="glycosylation site" description="N-linked (GlcNAc...) asparagine" evidence="5">
    <location>
        <position position="219"/>
    </location>
</feature>
<feature type="glycosylation site" description="N-linked (GlcNAc...) asparagine" evidence="1">
    <location>
        <position position="277"/>
    </location>
</feature>
<feature type="disulfide bond" evidence="2 5">
    <location>
        <begin position="28"/>
        <end position="116"/>
    </location>
</feature>
<feature type="disulfide bond" evidence="2 5">
    <location>
        <begin position="50"/>
        <end position="108"/>
    </location>
</feature>
<feature type="disulfide bond" evidence="2 5">
    <location>
        <begin position="152"/>
        <end position="207"/>
    </location>
</feature>
<feature type="disulfide bond" evidence="2 5">
    <location>
        <begin position="258"/>
        <end position="326"/>
    </location>
</feature>
<feature type="splice variant" id="VSP_042222" description="In isoform Short." evidence="11">
    <location>
        <begin position="297"/>
        <end position="398"/>
    </location>
</feature>
<feature type="sequence variant" id="VAR_019132" description="In dbSNP:rs28385682." evidence="10">
    <original>E</original>
    <variation>K</variation>
    <location>
        <position position="181"/>
    </location>
</feature>
<feature type="sequence variant" id="VAR_019133" description="In dbSNP:rs3218976." evidence="10">
    <original>E</original>
    <variation>K</variation>
    <location>
        <position position="292"/>
    </location>
</feature>
<feature type="sequence conflict" description="In Ref. 2; AAD00242." evidence="12" ref="2">
    <original>L</original>
    <variation>F</variation>
    <location>
        <position position="123"/>
    </location>
</feature>
<feature type="sequence conflict" description="In Ref. 2; AAD00242." evidence="12" ref="2">
    <original>K</original>
    <variation>R</variation>
    <location>
        <position position="171"/>
    </location>
</feature>
<feature type="sequence conflict" description="In Ref. 2; AAD00242." evidence="12" ref="2">
    <original>L</original>
    <variation>Q</variation>
    <location>
        <position position="199"/>
    </location>
</feature>
<feature type="strand" evidence="13">
    <location>
        <begin position="29"/>
        <end position="33"/>
    </location>
</feature>
<feature type="strand" evidence="13">
    <location>
        <begin position="38"/>
        <end position="41"/>
    </location>
</feature>
<feature type="strand" evidence="13">
    <location>
        <begin position="47"/>
        <end position="49"/>
    </location>
</feature>
<feature type="strand" evidence="13">
    <location>
        <begin position="70"/>
        <end position="73"/>
    </location>
</feature>
<feature type="strand" evidence="13">
    <location>
        <begin position="82"/>
        <end position="84"/>
    </location>
</feature>
<feature type="strand" evidence="13">
    <location>
        <begin position="86"/>
        <end position="89"/>
    </location>
</feature>
<feature type="strand" evidence="13">
    <location>
        <begin position="92"/>
        <end position="98"/>
    </location>
</feature>
<feature type="strand" evidence="13">
    <location>
        <begin position="104"/>
        <end position="107"/>
    </location>
</feature>
<feature type="strand" evidence="13">
    <location>
        <begin position="110"/>
        <end position="112"/>
    </location>
</feature>
<feature type="strand" evidence="13">
    <location>
        <begin position="115"/>
        <end position="126"/>
    </location>
</feature>
<feature type="helix" evidence="13">
    <location>
        <begin position="130"/>
        <end position="132"/>
    </location>
</feature>
<feature type="helix" evidence="13">
    <location>
        <begin position="133"/>
        <end position="136"/>
    </location>
</feature>
<feature type="strand" evidence="13">
    <location>
        <begin position="138"/>
        <end position="143"/>
    </location>
</feature>
<feature type="strand" evidence="13">
    <location>
        <begin position="148"/>
        <end position="151"/>
    </location>
</feature>
<feature type="turn" evidence="13">
    <location>
        <begin position="156"/>
        <end position="158"/>
    </location>
</feature>
<feature type="strand" evidence="13">
    <location>
        <begin position="161"/>
        <end position="163"/>
    </location>
</feature>
<feature type="strand" evidence="13">
    <location>
        <begin position="170"/>
        <end position="173"/>
    </location>
</feature>
<feature type="strand" evidence="13">
    <location>
        <begin position="181"/>
        <end position="185"/>
    </location>
</feature>
<feature type="strand" evidence="13">
    <location>
        <begin position="189"/>
        <end position="196"/>
    </location>
</feature>
<feature type="helix" evidence="13">
    <location>
        <begin position="199"/>
        <end position="201"/>
    </location>
</feature>
<feature type="strand" evidence="13">
    <location>
        <begin position="203"/>
        <end position="210"/>
    </location>
</feature>
<feature type="strand" evidence="13">
    <location>
        <begin position="219"/>
        <end position="229"/>
    </location>
</feature>
<feature type="strand" evidence="13">
    <location>
        <begin position="260"/>
        <end position="265"/>
    </location>
</feature>
<feature type="strand" evidence="13">
    <location>
        <begin position="271"/>
        <end position="279"/>
    </location>
</feature>
<feature type="strand" evidence="13">
    <location>
        <begin position="281"/>
        <end position="285"/>
    </location>
</feature>
<feature type="strand" evidence="13">
    <location>
        <begin position="287"/>
        <end position="289"/>
    </location>
</feature>
<feature type="strand" evidence="13">
    <location>
        <begin position="301"/>
        <end position="303"/>
    </location>
</feature>
<feature type="strand" evidence="13">
    <location>
        <begin position="305"/>
        <end position="308"/>
    </location>
</feature>
<feature type="strand" evidence="13">
    <location>
        <begin position="325"/>
        <end position="330"/>
    </location>
</feature>
<feature type="strand" evidence="13">
    <location>
        <begin position="333"/>
        <end position="335"/>
    </location>
</feature>
<reference key="1">
    <citation type="journal article" date="1991" name="EMBO J.">
        <title>A novel IL-1 receptor, cloned from B cells by mammalian expression, is expressed in many cell types.</title>
        <authorList>
            <person name="McMahan C.J."/>
            <person name="Slack J.L."/>
            <person name="Mosley B."/>
            <person name="Cosman D."/>
            <person name="Lupton S.D."/>
            <person name="Brunton L.L."/>
            <person name="Grubin C.E."/>
            <person name="Wignall J.M."/>
            <person name="Jenkins N.A."/>
            <person name="Brannan C.I."/>
            <person name="Copeland N.G."/>
            <person name="Huebner K."/>
            <person name="Croce C.M."/>
            <person name="Cannizzarro L.A."/>
            <person name="Benjamin D."/>
            <person name="Dower S.K."/>
            <person name="Spriggs M.K."/>
            <person name="Sims J.E."/>
        </authorList>
    </citation>
    <scope>NUCLEOTIDE SEQUENCE [MRNA] (ISOFORM LONG)</scope>
    <source>
        <tissue>B-cell</tissue>
    </source>
</reference>
<reference key="2">
    <citation type="journal article" date="1996" name="J. Biol. Chem.">
        <title>Cloning and characterization of an alternatively processed human type II interleukin-1 receptor mRNA.</title>
        <authorList>
            <person name="Liu C."/>
            <person name="Hart R.P."/>
            <person name="Liu X.J."/>
            <person name="Clevenger W."/>
            <person name="Maki R.A."/>
            <person name="Souza E.B."/>
        </authorList>
    </citation>
    <scope>NUCLEOTIDE SEQUENCE [MRNA] (ISOFORM SHORT)</scope>
    <scope>IL1B-BINDING</scope>
    <scope>SUBCELLULAR LOCATION (ISOFORM SHORT)</scope>
</reference>
<reference key="3">
    <citation type="submission" date="1996-10" db="EMBL/GenBank/DDBJ databases">
        <title>Complete nucleotide sequence and expression of the human interleukin-1 receptor type II in human gingival fibroblasts.</title>
        <authorList>
            <person name="Chou H.-H."/>
            <person name="Takashiba T."/>
            <person name="Takigawa M."/>
            <person name="Maeda H."/>
            <person name="Asahara Y."/>
            <person name="Nishimura F."/>
            <person name="Arai H."/>
            <person name="Murayama Y."/>
        </authorList>
    </citation>
    <scope>NUCLEOTIDE SEQUENCE [MRNA] (ISOFORM LONG)</scope>
</reference>
<reference key="4">
    <citation type="submission" date="2002-06" db="EMBL/GenBank/DDBJ databases">
        <authorList>
            <consortium name="SeattleSNPs variation discovery resource"/>
        </authorList>
    </citation>
    <scope>NUCLEOTIDE SEQUENCE [GENOMIC DNA]</scope>
    <scope>VARIANTS LYS-181 AND LYS-292</scope>
</reference>
<reference key="5">
    <citation type="journal article" date="2005" name="Nature">
        <title>Generation and annotation of the DNA sequences of human chromosomes 2 and 4.</title>
        <authorList>
            <person name="Hillier L.W."/>
            <person name="Graves T.A."/>
            <person name="Fulton R.S."/>
            <person name="Fulton L.A."/>
            <person name="Pepin K.H."/>
            <person name="Minx P."/>
            <person name="Wagner-McPherson C."/>
            <person name="Layman D."/>
            <person name="Wylie K."/>
            <person name="Sekhon M."/>
            <person name="Becker M.C."/>
            <person name="Fewell G.A."/>
            <person name="Delehaunty K.D."/>
            <person name="Miner T.L."/>
            <person name="Nash W.E."/>
            <person name="Kremitzki C."/>
            <person name="Oddy L."/>
            <person name="Du H."/>
            <person name="Sun H."/>
            <person name="Bradshaw-Cordum H."/>
            <person name="Ali J."/>
            <person name="Carter J."/>
            <person name="Cordes M."/>
            <person name="Harris A."/>
            <person name="Isak A."/>
            <person name="van Brunt A."/>
            <person name="Nguyen C."/>
            <person name="Du F."/>
            <person name="Courtney L."/>
            <person name="Kalicki J."/>
            <person name="Ozersky P."/>
            <person name="Abbott S."/>
            <person name="Armstrong J."/>
            <person name="Belter E.A."/>
            <person name="Caruso L."/>
            <person name="Cedroni M."/>
            <person name="Cotton M."/>
            <person name="Davidson T."/>
            <person name="Desai A."/>
            <person name="Elliott G."/>
            <person name="Erb T."/>
            <person name="Fronick C."/>
            <person name="Gaige T."/>
            <person name="Haakenson W."/>
            <person name="Haglund K."/>
            <person name="Holmes A."/>
            <person name="Harkins R."/>
            <person name="Kim K."/>
            <person name="Kruchowski S.S."/>
            <person name="Strong C.M."/>
            <person name="Grewal N."/>
            <person name="Goyea E."/>
            <person name="Hou S."/>
            <person name="Levy A."/>
            <person name="Martinka S."/>
            <person name="Mead K."/>
            <person name="McLellan M.D."/>
            <person name="Meyer R."/>
            <person name="Randall-Maher J."/>
            <person name="Tomlinson C."/>
            <person name="Dauphin-Kohlberg S."/>
            <person name="Kozlowicz-Reilly A."/>
            <person name="Shah N."/>
            <person name="Swearengen-Shahid S."/>
            <person name="Snider J."/>
            <person name="Strong J.T."/>
            <person name="Thompson J."/>
            <person name="Yoakum M."/>
            <person name="Leonard S."/>
            <person name="Pearman C."/>
            <person name="Trani L."/>
            <person name="Radionenko M."/>
            <person name="Waligorski J.E."/>
            <person name="Wang C."/>
            <person name="Rock S.M."/>
            <person name="Tin-Wollam A.-M."/>
            <person name="Maupin R."/>
            <person name="Latreille P."/>
            <person name="Wendl M.C."/>
            <person name="Yang S.-P."/>
            <person name="Pohl C."/>
            <person name="Wallis J.W."/>
            <person name="Spieth J."/>
            <person name="Bieri T.A."/>
            <person name="Berkowicz N."/>
            <person name="Nelson J.O."/>
            <person name="Osborne J."/>
            <person name="Ding L."/>
            <person name="Meyer R."/>
            <person name="Sabo A."/>
            <person name="Shotland Y."/>
            <person name="Sinha P."/>
            <person name="Wohldmann P.E."/>
            <person name="Cook L.L."/>
            <person name="Hickenbotham M.T."/>
            <person name="Eldred J."/>
            <person name="Williams D."/>
            <person name="Jones T.A."/>
            <person name="She X."/>
            <person name="Ciccarelli F.D."/>
            <person name="Izaurralde E."/>
            <person name="Taylor J."/>
            <person name="Schmutz J."/>
            <person name="Myers R.M."/>
            <person name="Cox D.R."/>
            <person name="Huang X."/>
            <person name="McPherson J.D."/>
            <person name="Mardis E.R."/>
            <person name="Clifton S.W."/>
            <person name="Warren W.C."/>
            <person name="Chinwalla A.T."/>
            <person name="Eddy S.R."/>
            <person name="Marra M.A."/>
            <person name="Ovcharenko I."/>
            <person name="Furey T.S."/>
            <person name="Miller W."/>
            <person name="Eichler E.E."/>
            <person name="Bork P."/>
            <person name="Suyama M."/>
            <person name="Torrents D."/>
            <person name="Waterston R.H."/>
            <person name="Wilson R.K."/>
        </authorList>
    </citation>
    <scope>NUCLEOTIDE SEQUENCE [LARGE SCALE GENOMIC DNA]</scope>
</reference>
<reference key="6">
    <citation type="submission" date="2005-09" db="EMBL/GenBank/DDBJ databases">
        <authorList>
            <person name="Mural R.J."/>
            <person name="Istrail S."/>
            <person name="Sutton G.G."/>
            <person name="Florea L."/>
            <person name="Halpern A.L."/>
            <person name="Mobarry C.M."/>
            <person name="Lippert R."/>
            <person name="Walenz B."/>
            <person name="Shatkay H."/>
            <person name="Dew I."/>
            <person name="Miller J.R."/>
            <person name="Flanigan M.J."/>
            <person name="Edwards N.J."/>
            <person name="Bolanos R."/>
            <person name="Fasulo D."/>
            <person name="Halldorsson B.V."/>
            <person name="Hannenhalli S."/>
            <person name="Turner R."/>
            <person name="Yooseph S."/>
            <person name="Lu F."/>
            <person name="Nusskern D.R."/>
            <person name="Shue B.C."/>
            <person name="Zheng X.H."/>
            <person name="Zhong F."/>
            <person name="Delcher A.L."/>
            <person name="Huson D.H."/>
            <person name="Kravitz S.A."/>
            <person name="Mouchard L."/>
            <person name="Reinert K."/>
            <person name="Remington K.A."/>
            <person name="Clark A.G."/>
            <person name="Waterman M.S."/>
            <person name="Eichler E.E."/>
            <person name="Adams M.D."/>
            <person name="Hunkapiller M.W."/>
            <person name="Myers E.W."/>
            <person name="Venter J.C."/>
        </authorList>
    </citation>
    <scope>NUCLEOTIDE SEQUENCE [LARGE SCALE GENOMIC DNA]</scope>
</reference>
<reference key="7">
    <citation type="journal article" date="2004" name="Genome Res.">
        <title>The status, quality, and expansion of the NIH full-length cDNA project: the Mammalian Gene Collection (MGC).</title>
        <authorList>
            <consortium name="The MGC Project Team"/>
        </authorList>
    </citation>
    <scope>NUCLEOTIDE SEQUENCE [LARGE SCALE MRNA] (ISOFORM LONG)</scope>
    <source>
        <tissue>Ovary</tissue>
    </source>
</reference>
<reference key="8">
    <citation type="journal article" date="1994" name="J. Immunol.">
        <title>Elevated levels of shed type II IL-1 receptor in sepsis. Potential role for type II receptor in regulation of IL-1 responses.</title>
        <authorList>
            <person name="Giri J.G."/>
            <person name="Wells J."/>
            <person name="Dower S.K."/>
            <person name="McCall C.E."/>
            <person name="Guzman R.N."/>
            <person name="Slack J."/>
            <person name="Bird T.A."/>
            <person name="Shanebeck K."/>
            <person name="Grabstein K.H."/>
            <person name="Sims J.E."/>
            <person name="Alderson M.R."/>
        </authorList>
    </citation>
    <scope>FUNCTION</scope>
    <scope>PROTEOLYTIC PROCESSING</scope>
    <scope>LIGAND-BINDING</scope>
</reference>
<reference key="9">
    <citation type="journal article" date="1995" name="Proc. Natl. Acad. Sci. U.S.A.">
        <title>Soluble type II interleukin 1 (IL-1) receptor binds and blocks processing of IL-1 beta precursor and loses affinity for IL-1 receptor antagonist.</title>
        <authorList>
            <person name="Symons J.A."/>
            <person name="Young P.R."/>
            <person name="Duff G.W."/>
        </authorList>
    </citation>
    <scope>LIGAND-BINDING</scope>
</reference>
<reference key="10">
    <citation type="journal article" date="1997" name="J. Biol. Chem.">
        <title>Role of metalloproteases in the release of the IL-1 type II decoy receptor.</title>
        <authorList>
            <person name="Orlando S."/>
            <person name="Sironi M."/>
            <person name="Bianchi G."/>
            <person name="Drummond A.H."/>
            <person name="Boraschi D."/>
            <person name="Yabes D."/>
            <person name="Mantovani A."/>
        </authorList>
    </citation>
    <scope>PROTEOLYTIC PROCESSING</scope>
</reference>
<reference key="11">
    <citation type="journal article" date="1998" name="J. Immunol.">
        <title>The type II IL-1 receptor interacts with the IL-1 receptor accessory protein: a novel mechanism of regulation of IL-1 responsiveness.</title>
        <authorList>
            <person name="Lang D."/>
            <person name="Knop J."/>
            <person name="Wesche H."/>
            <person name="Raffetseder U."/>
            <person name="Kurrle R."/>
            <person name="Boraschi D."/>
            <person name="Martin M.U."/>
        </authorList>
    </citation>
    <scope>FUNCTION</scope>
    <scope>INTERACTION WITH IL1RAP</scope>
</reference>
<reference key="12">
    <citation type="journal article" date="2000" name="J. Immunol.">
        <title>The membrane form of the type II IL-1 receptor accounts for inhibitory function.</title>
        <authorList>
            <person name="Neumann D."/>
            <person name="Kollewe C."/>
            <person name="Martin M.U."/>
            <person name="Boraschi D."/>
        </authorList>
    </citation>
    <scope>FUNCTION AS DECOY RECEPTOR</scope>
</reference>
<reference key="13">
    <citation type="journal article" date="2003" name="Immunity">
        <title>The soluble form of IL-1 receptor accessory protein enhances the ability of soluble type II IL-1 receptor to inhibit IL-1 action.</title>
        <authorList>
            <person name="Smith D.E."/>
            <person name="Hanna R."/>
            <person name="Friend D."/>
            <person name="Moore H."/>
            <person name="Chen H."/>
            <person name="Farese A.M."/>
            <person name="MacVittie T.J."/>
            <person name="Virca G.D."/>
            <person name="Sims J.E."/>
        </authorList>
    </citation>
    <scope>FUNCTION AS DECOY RECEPTOR</scope>
</reference>
<reference key="14">
    <citation type="journal article" date="2010" name="Nat. Immunol.">
        <title>Structural insights into the assembly and activation of IL-1beta with its receptors.</title>
        <authorList>
            <person name="Wang D."/>
            <person name="Zhang S."/>
            <person name="Li L."/>
            <person name="Liu X."/>
            <person name="Mei K."/>
            <person name="Wang X."/>
        </authorList>
    </citation>
    <scope>X-RAY CRYSTALLOGRAPHY (3.3 ANGSTROMS) OF 14-343 IN COMPLEX WITH IL1RAP AND IL1B</scope>
    <scope>SUBUNIT</scope>
    <scope>DISULFIDE BONDS</scope>
    <scope>GLYCOSYLATION AT ASN-112 AND ASN-219</scope>
</reference>
<organism>
    <name type="scientific">Homo sapiens</name>
    <name type="common">Human</name>
    <dbReference type="NCBI Taxonomy" id="9606"/>
    <lineage>
        <taxon>Eukaryota</taxon>
        <taxon>Metazoa</taxon>
        <taxon>Chordata</taxon>
        <taxon>Craniata</taxon>
        <taxon>Vertebrata</taxon>
        <taxon>Euteleostomi</taxon>
        <taxon>Mammalia</taxon>
        <taxon>Eutheria</taxon>
        <taxon>Euarchontoglires</taxon>
        <taxon>Primates</taxon>
        <taxon>Haplorrhini</taxon>
        <taxon>Catarrhini</taxon>
        <taxon>Hominidae</taxon>
        <taxon>Homo</taxon>
    </lineage>
</organism>
<comment type="function">
    <text evidence="3 4 6 9">Non-signaling receptor for IL1A, IL1B and IL1RN. Reduces IL1B activities. Serves as a decoy receptor by competitive binding to IL1B and preventing its binding to IL1R1. Also modulates cellular response through non-signaling association with IL1RAP after binding to IL1B. IL1R2 (membrane and secreted forms) preferentially binds IL1B and poorly IL1A and IL1RN. The secreted IL1R2 recruits secreted IL1RAP with high affinity; this complex formation may be the dominant mechanism for neutralization of IL1B by secreted/soluble receptors.</text>
</comment>
<comment type="subunit">
    <text evidence="5">Associates with IL1RAP to form a non-signaling interleukin-1 receptor complex.</text>
</comment>
<comment type="interaction">
    <interactant intactId="EBI-2831568">
        <id>P27930</id>
    </interactant>
    <interactant intactId="EBI-1749782">
        <id>P01583</id>
        <label>IL1A</label>
    </interactant>
    <organismsDiffer>false</organismsDiffer>
    <experiments>4</experiments>
</comment>
<comment type="subcellular location">
    <molecule>Isoform Short</molecule>
    <subcellularLocation>
        <location evidence="7">Secreted</location>
    </subcellularLocation>
</comment>
<comment type="subcellular location">
    <molecule>Isoform Long</molecule>
    <subcellularLocation>
        <location>Cell membrane</location>
        <topology>Single-pass type I membrane protein</topology>
    </subcellularLocation>
</comment>
<comment type="alternative products">
    <event type="alternative splicing"/>
    <isoform>
        <id>P27930-1</id>
        <name>Long</name>
        <sequence type="displayed"/>
    </isoform>
    <isoform>
        <id>P27930-2</id>
        <name>Short</name>
        <sequence type="described" ref="VSP_042222"/>
    </isoform>
</comment>
<comment type="PTM">
    <text evidence="6 8">A soluble form (sIL1R2) can also be produced by proteolytic cleavage at the cell surface (shedding) involving a metalloproteinase; hovever, several sIL1R2 forms ranging from 45 and 60 kDa are reported.</text>
</comment>
<comment type="similarity">
    <text evidence="12">Belongs to the interleukin-1 receptor family.</text>
</comment>
<dbReference type="EMBL" id="X59770">
    <property type="protein sequence ID" value="CAA42441.1"/>
    <property type="molecule type" value="mRNA"/>
</dbReference>
<dbReference type="EMBL" id="U64094">
    <property type="protein sequence ID" value="AAB05878.1"/>
    <property type="molecule type" value="mRNA"/>
</dbReference>
<dbReference type="EMBL" id="U74649">
    <property type="protein sequence ID" value="AAD00242.1"/>
    <property type="molecule type" value="mRNA"/>
</dbReference>
<dbReference type="EMBL" id="AY124010">
    <property type="protein sequence ID" value="AAM64221.1"/>
    <property type="molecule type" value="Genomic_DNA"/>
</dbReference>
<dbReference type="EMBL" id="AC007165">
    <property type="protein sequence ID" value="AAK52072.1"/>
    <property type="molecule type" value="Genomic_DNA"/>
</dbReference>
<dbReference type="EMBL" id="CH471127">
    <property type="protein sequence ID" value="EAX01800.1"/>
    <property type="molecule type" value="Genomic_DNA"/>
</dbReference>
<dbReference type="EMBL" id="CH471127">
    <property type="protein sequence ID" value="EAX01801.1"/>
    <property type="molecule type" value="Genomic_DNA"/>
</dbReference>
<dbReference type="EMBL" id="CH471127">
    <property type="protein sequence ID" value="EAX01802.1"/>
    <property type="molecule type" value="Genomic_DNA"/>
</dbReference>
<dbReference type="EMBL" id="CH471127">
    <property type="protein sequence ID" value="EAX01803.1"/>
    <property type="molecule type" value="Genomic_DNA"/>
</dbReference>
<dbReference type="EMBL" id="BC039031">
    <property type="protein sequence ID" value="AAH39031.1"/>
    <property type="molecule type" value="mRNA"/>
</dbReference>
<dbReference type="CCDS" id="CCDS2054.1">
    <molecule id="P27930-1"/>
</dbReference>
<dbReference type="CCDS" id="CCDS58719.1">
    <molecule id="P27930-2"/>
</dbReference>
<dbReference type="PIR" id="S17428">
    <property type="entry name" value="S17428"/>
</dbReference>
<dbReference type="RefSeq" id="NP_001248348.1">
    <molecule id="P27930-2"/>
    <property type="nucleotide sequence ID" value="NM_001261419.2"/>
</dbReference>
<dbReference type="RefSeq" id="NP_004624.1">
    <molecule id="P27930-1"/>
    <property type="nucleotide sequence ID" value="NM_004633.4"/>
</dbReference>
<dbReference type="RefSeq" id="XP_006712797.1">
    <molecule id="P27930-1"/>
    <property type="nucleotide sequence ID" value="XM_006712734.4"/>
</dbReference>
<dbReference type="RefSeq" id="XP_011510106.1">
    <molecule id="P27930-1"/>
    <property type="nucleotide sequence ID" value="XM_011511804.4"/>
</dbReference>
<dbReference type="RefSeq" id="XP_054199806.1">
    <molecule id="P27930-1"/>
    <property type="nucleotide sequence ID" value="XM_054343831.1"/>
</dbReference>
<dbReference type="PDB" id="3O4O">
    <property type="method" value="X-ray"/>
    <property type="resolution" value="3.30 A"/>
    <property type="chains" value="C=14-343"/>
</dbReference>
<dbReference type="PDBsum" id="3O4O"/>
<dbReference type="SASBDB" id="P27930"/>
<dbReference type="SMR" id="P27930"/>
<dbReference type="BioGRID" id="113605">
    <property type="interactions" value="69"/>
</dbReference>
<dbReference type="ComplexPortal" id="CPX-522">
    <property type="entry name" value="Interleukin-1 beta ligand-decoy receptor type 2 complex"/>
</dbReference>
<dbReference type="ComplexPortal" id="CPX-9168">
    <property type="entry name" value="Interleukin-1 alpha decoy receptor-ligand type 2 complex"/>
</dbReference>
<dbReference type="DIP" id="DIP-61267N"/>
<dbReference type="FunCoup" id="P27930">
    <property type="interactions" value="998"/>
</dbReference>
<dbReference type="IntAct" id="P27930">
    <property type="interactions" value="59"/>
</dbReference>
<dbReference type="MINT" id="P27930"/>
<dbReference type="STRING" id="9606.ENSP00000330959"/>
<dbReference type="GlyConnect" id="1949">
    <property type="glycosylation" value="8 N-Linked glycans (2 sites)"/>
</dbReference>
<dbReference type="GlyCosmos" id="P27930">
    <property type="glycosylation" value="5 sites, 8 glycans"/>
</dbReference>
<dbReference type="GlyGen" id="P27930">
    <property type="glycosylation" value="5 sites, 10 N-linked glycans (2 sites)"/>
</dbReference>
<dbReference type="iPTMnet" id="P27930"/>
<dbReference type="PhosphoSitePlus" id="P27930"/>
<dbReference type="BioMuta" id="IL1R2"/>
<dbReference type="DMDM" id="124310"/>
<dbReference type="jPOST" id="P27930"/>
<dbReference type="MassIVE" id="P27930"/>
<dbReference type="PaxDb" id="9606-ENSP00000330959"/>
<dbReference type="PeptideAtlas" id="P27930"/>
<dbReference type="ProteomicsDB" id="54427">
    <molecule id="P27930-1"/>
</dbReference>
<dbReference type="ProteomicsDB" id="54428">
    <molecule id="P27930-2"/>
</dbReference>
<dbReference type="Antibodypedia" id="17756">
    <property type="antibodies" value="671 antibodies from 41 providers"/>
</dbReference>
<dbReference type="DNASU" id="7850"/>
<dbReference type="Ensembl" id="ENST00000332549.8">
    <molecule id="P27930-1"/>
    <property type="protein sequence ID" value="ENSP00000330959.3"/>
    <property type="gene ID" value="ENSG00000115590.14"/>
</dbReference>
<dbReference type="Ensembl" id="ENST00000393414.6">
    <molecule id="P27930-1"/>
    <property type="protein sequence ID" value="ENSP00000377066.2"/>
    <property type="gene ID" value="ENSG00000115590.14"/>
</dbReference>
<dbReference type="Ensembl" id="ENST00000441002.1">
    <molecule id="P27930-2"/>
    <property type="protein sequence ID" value="ENSP00000414611.1"/>
    <property type="gene ID" value="ENSG00000115590.14"/>
</dbReference>
<dbReference type="GeneID" id="7850"/>
<dbReference type="KEGG" id="hsa:7850"/>
<dbReference type="MANE-Select" id="ENST00000332549.8">
    <property type="protein sequence ID" value="ENSP00000330959.3"/>
    <property type="RefSeq nucleotide sequence ID" value="NM_004633.4"/>
    <property type="RefSeq protein sequence ID" value="NP_004624.1"/>
</dbReference>
<dbReference type="UCSC" id="uc002tbm.4">
    <molecule id="P27930-1"/>
    <property type="organism name" value="human"/>
</dbReference>
<dbReference type="AGR" id="HGNC:5994"/>
<dbReference type="CTD" id="7850"/>
<dbReference type="DisGeNET" id="7850"/>
<dbReference type="GeneCards" id="IL1R2"/>
<dbReference type="HGNC" id="HGNC:5994">
    <property type="gene designation" value="IL1R2"/>
</dbReference>
<dbReference type="HPA" id="ENSG00000115590">
    <property type="expression patterns" value="Tissue enhanced (lymphoid)"/>
</dbReference>
<dbReference type="MIM" id="147811">
    <property type="type" value="gene"/>
</dbReference>
<dbReference type="neXtProt" id="NX_P27930"/>
<dbReference type="OpenTargets" id="ENSG00000115590"/>
<dbReference type="PharmGKB" id="PA29810"/>
<dbReference type="VEuPathDB" id="HostDB:ENSG00000115590"/>
<dbReference type="eggNOG" id="ENOG502QVTS">
    <property type="taxonomic scope" value="Eukaryota"/>
</dbReference>
<dbReference type="GeneTree" id="ENSGT01090000259985"/>
<dbReference type="HOGENOM" id="CLU_051287_0_0_1"/>
<dbReference type="InParanoid" id="P27930"/>
<dbReference type="OMA" id="LLWWTAN"/>
<dbReference type="OrthoDB" id="9881731at2759"/>
<dbReference type="PAN-GO" id="P27930">
    <property type="GO annotations" value="2 GO annotations based on evolutionary models"/>
</dbReference>
<dbReference type="PhylomeDB" id="P27930"/>
<dbReference type="TreeFam" id="TF325519"/>
<dbReference type="PathwayCommons" id="P27930"/>
<dbReference type="Reactome" id="R-HSA-6783783">
    <property type="pathway name" value="Interleukin-10 signaling"/>
</dbReference>
<dbReference type="Reactome" id="R-HSA-9020702">
    <property type="pathway name" value="Interleukin-1 signaling"/>
</dbReference>
<dbReference type="SignaLink" id="P27930"/>
<dbReference type="SIGNOR" id="P27930"/>
<dbReference type="BioGRID-ORCS" id="7850">
    <property type="hits" value="33 hits in 1146 CRISPR screens"/>
</dbReference>
<dbReference type="ChiTaRS" id="IL1R2">
    <property type="organism name" value="human"/>
</dbReference>
<dbReference type="EvolutionaryTrace" id="P27930"/>
<dbReference type="GeneWiki" id="Interleukin_1_receptor,_type_II"/>
<dbReference type="GenomeRNAi" id="7850"/>
<dbReference type="Pharos" id="P27930">
    <property type="development level" value="Tbio"/>
</dbReference>
<dbReference type="PRO" id="PR:P27930"/>
<dbReference type="Proteomes" id="UP000005640">
    <property type="component" value="Chromosome 2"/>
</dbReference>
<dbReference type="RNAct" id="P27930">
    <property type="molecule type" value="protein"/>
</dbReference>
<dbReference type="Bgee" id="ENSG00000115590">
    <property type="expression patterns" value="Expressed in corpus epididymis and 162 other cell types or tissues"/>
</dbReference>
<dbReference type="ExpressionAtlas" id="P27930">
    <property type="expression patterns" value="baseline and differential"/>
</dbReference>
<dbReference type="GO" id="GO:0009986">
    <property type="term" value="C:cell surface"/>
    <property type="evidence" value="ECO:0000318"/>
    <property type="project" value="GO_Central"/>
</dbReference>
<dbReference type="GO" id="GO:0005737">
    <property type="term" value="C:cytoplasm"/>
    <property type="evidence" value="ECO:0007669"/>
    <property type="project" value="Ensembl"/>
</dbReference>
<dbReference type="GO" id="GO:0005576">
    <property type="term" value="C:extracellular region"/>
    <property type="evidence" value="ECO:0007669"/>
    <property type="project" value="UniProtKB-SubCell"/>
</dbReference>
<dbReference type="GO" id="GO:0005886">
    <property type="term" value="C:plasma membrane"/>
    <property type="evidence" value="ECO:0000318"/>
    <property type="project" value="GO_Central"/>
</dbReference>
<dbReference type="GO" id="GO:0019966">
    <property type="term" value="F:interleukin-1 binding"/>
    <property type="evidence" value="ECO:0007669"/>
    <property type="project" value="Ensembl"/>
</dbReference>
<dbReference type="GO" id="GO:0004908">
    <property type="term" value="F:interleukin-1 receptor activity"/>
    <property type="evidence" value="ECO:0000318"/>
    <property type="project" value="GO_Central"/>
</dbReference>
<dbReference type="GO" id="GO:0004910">
    <property type="term" value="F:interleukin-1, type II, blocking receptor activity"/>
    <property type="evidence" value="ECO:0007669"/>
    <property type="project" value="InterPro"/>
</dbReference>
<dbReference type="GO" id="GO:0007166">
    <property type="term" value="P:cell surface receptor signaling pathway"/>
    <property type="evidence" value="ECO:0000318"/>
    <property type="project" value="GO_Central"/>
</dbReference>
<dbReference type="GO" id="GO:0006955">
    <property type="term" value="P:immune response"/>
    <property type="evidence" value="ECO:0000304"/>
    <property type="project" value="ProtInc"/>
</dbReference>
<dbReference type="GO" id="GO:1900016">
    <property type="term" value="P:negative regulation of cytokine production involved in inflammatory response"/>
    <property type="evidence" value="ECO:0007669"/>
    <property type="project" value="Ensembl"/>
</dbReference>
<dbReference type="GO" id="GO:0032690">
    <property type="term" value="P:negative regulation of interleukin-1 alpha production"/>
    <property type="evidence" value="ECO:0007669"/>
    <property type="project" value="Ensembl"/>
</dbReference>
<dbReference type="GO" id="GO:2000660">
    <property type="term" value="P:negative regulation of interleukin-1-mediated signaling pathway"/>
    <property type="evidence" value="ECO:0007669"/>
    <property type="project" value="Ensembl"/>
</dbReference>
<dbReference type="GO" id="GO:0010955">
    <property type="term" value="P:negative regulation of protein processing"/>
    <property type="evidence" value="ECO:0007669"/>
    <property type="project" value="Ensembl"/>
</dbReference>
<dbReference type="GO" id="GO:0016485">
    <property type="term" value="P:protein processing"/>
    <property type="evidence" value="ECO:0007669"/>
    <property type="project" value="Ensembl"/>
</dbReference>
<dbReference type="CDD" id="cd05756">
    <property type="entry name" value="Ig1_IL1R_like"/>
    <property type="match status" value="1"/>
</dbReference>
<dbReference type="CDD" id="cd05897">
    <property type="entry name" value="Ig2_IL1R2_like"/>
    <property type="match status" value="1"/>
</dbReference>
<dbReference type="FunFam" id="2.60.40.10:FF:001027">
    <property type="entry name" value="Interleukin 1 receptor type 2"/>
    <property type="match status" value="1"/>
</dbReference>
<dbReference type="FunFam" id="2.60.40.10:FF:001326">
    <property type="entry name" value="Interleukin 1 receptor type 2"/>
    <property type="match status" value="1"/>
</dbReference>
<dbReference type="FunFam" id="2.60.40.10:FF:000188">
    <property type="entry name" value="Interleukin-1 receptor accessory protein-like 1"/>
    <property type="match status" value="1"/>
</dbReference>
<dbReference type="Gene3D" id="2.60.40.10">
    <property type="entry name" value="Immunoglobulins"/>
    <property type="match status" value="3"/>
</dbReference>
<dbReference type="InterPro" id="IPR007110">
    <property type="entry name" value="Ig-like_dom"/>
</dbReference>
<dbReference type="InterPro" id="IPR036179">
    <property type="entry name" value="Ig-like_dom_sf"/>
</dbReference>
<dbReference type="InterPro" id="IPR013783">
    <property type="entry name" value="Ig-like_fold"/>
</dbReference>
<dbReference type="InterPro" id="IPR003599">
    <property type="entry name" value="Ig_sub"/>
</dbReference>
<dbReference type="InterPro" id="IPR003598">
    <property type="entry name" value="Ig_sub2"/>
</dbReference>
<dbReference type="InterPro" id="IPR015621">
    <property type="entry name" value="IL-1_rcpt_fam"/>
</dbReference>
<dbReference type="InterPro" id="IPR004074">
    <property type="entry name" value="IL-1_rcpt_I/II-typ"/>
</dbReference>
<dbReference type="InterPro" id="IPR004077">
    <property type="entry name" value="IL-1_rcpt_II-typ"/>
</dbReference>
<dbReference type="InterPro" id="IPR013151">
    <property type="entry name" value="Immunoglobulin_dom"/>
</dbReference>
<dbReference type="PANTHER" id="PTHR11890">
    <property type="entry name" value="INTERLEUKIN-1 RECEPTOR FAMILY MEMBER"/>
    <property type="match status" value="1"/>
</dbReference>
<dbReference type="PANTHER" id="PTHR11890:SF3">
    <property type="entry name" value="INTERLEUKIN-1 RECEPTOR TYPE 2"/>
    <property type="match status" value="1"/>
</dbReference>
<dbReference type="Pfam" id="PF00047">
    <property type="entry name" value="ig"/>
    <property type="match status" value="1"/>
</dbReference>
<dbReference type="PRINTS" id="PR01539">
    <property type="entry name" value="INTRLEUKN1R2"/>
</dbReference>
<dbReference type="PRINTS" id="PR01536">
    <property type="entry name" value="INTRLKN1R12F"/>
</dbReference>
<dbReference type="SMART" id="SM00409">
    <property type="entry name" value="IG"/>
    <property type="match status" value="3"/>
</dbReference>
<dbReference type="SMART" id="SM00408">
    <property type="entry name" value="IGc2"/>
    <property type="match status" value="2"/>
</dbReference>
<dbReference type="SUPFAM" id="SSF48726">
    <property type="entry name" value="Immunoglobulin"/>
    <property type="match status" value="3"/>
</dbReference>
<dbReference type="PROSITE" id="PS50835">
    <property type="entry name" value="IG_LIKE"/>
    <property type="match status" value="3"/>
</dbReference>
<name>IL1R2_HUMAN</name>
<accession>P27930</accession>
<accession>D3DVJ5</accession>
<accession>Q6LCE6</accession>
<accession>Q9UE68</accession>
<proteinExistence type="evidence at protein level"/>
<sequence>MLRLYVLVMGVSAFTLQPAAHTGAARSCRFRGRHYKREFRLEGEPVALRCPQVPYWLWASVSPRINLTWHKNDSARTVPGEEETRMWAQDGALWLLPALQEDSGTYVCTTRNASYCDKMSIELRVFENTDAFLPFISYPQILTLSTSGVLVCPDLSEFTRDKTDVKIQWYKDSLLLDKDNEKFLSVRGTTHLLVHDVALEDAGYYRCVLTFAHEGQQYNITRSIELRIKKKKEETIPVIISPLKTISASLGSRLTIPCKVFLGTGTPLTTMLWWTANDTHIESAYPGGRVTEGPRQEYSENNENYIEVPLIFDPVTREDLHMDFKCVVHNTLSFQTLRTTVKEASSTFSWGIVLAPLSLAFLVLGGIWMHRRCKHRTGKADGLTVLWPHHQDFQSYPK</sequence>
<protein>
    <recommendedName>
        <fullName>Interleukin-1 receptor type 2</fullName>
        <shortName>IL-1R-2</shortName>
        <shortName>IL-1RT-2</shortName>
        <shortName>IL-1RT2</shortName>
    </recommendedName>
    <alternativeName>
        <fullName>CD121 antigen-like family member B</fullName>
    </alternativeName>
    <alternativeName>
        <fullName>CDw121b</fullName>
    </alternativeName>
    <alternativeName>
        <fullName>IL-1 type II receptor</fullName>
    </alternativeName>
    <alternativeName>
        <fullName>Interleukin-1 receptor beta</fullName>
        <shortName>IL-1R-beta</shortName>
    </alternativeName>
    <alternativeName>
        <fullName>Interleukin-1 receptor type II</fullName>
    </alternativeName>
    <cdAntigenName>CD121b</cdAntigenName>
    <component>
        <recommendedName>
            <fullName>Interleukin-1 receptor type 2, membrane form</fullName>
            <shortName>mIL-1R2</shortName>
            <shortName>mIL-1RII</shortName>
        </recommendedName>
    </component>
    <component>
        <recommendedName>
            <fullName>Interleukin-1 receptor type 2, soluble form</fullName>
            <shortName>sIL-1R2</shortName>
            <shortName>sIL-1RII</shortName>
        </recommendedName>
    </component>
</protein>
<evidence type="ECO:0000255" key="1"/>
<evidence type="ECO:0000255" key="2">
    <source>
        <dbReference type="PROSITE-ProRule" id="PRU00114"/>
    </source>
</evidence>
<evidence type="ECO:0000269" key="3">
    <source>
    </source>
</evidence>
<evidence type="ECO:0000269" key="4">
    <source>
    </source>
</evidence>
<evidence type="ECO:0000269" key="5">
    <source>
    </source>
</evidence>
<evidence type="ECO:0000269" key="6">
    <source>
    </source>
</evidence>
<evidence type="ECO:0000269" key="7">
    <source>
    </source>
</evidence>
<evidence type="ECO:0000269" key="8">
    <source>
    </source>
</evidence>
<evidence type="ECO:0000269" key="9">
    <source>
    </source>
</evidence>
<evidence type="ECO:0000269" key="10">
    <source ref="4"/>
</evidence>
<evidence type="ECO:0000303" key="11">
    <source>
    </source>
</evidence>
<evidence type="ECO:0000305" key="12"/>
<evidence type="ECO:0007829" key="13">
    <source>
        <dbReference type="PDB" id="3O4O"/>
    </source>
</evidence>
<keyword id="KW-0002">3D-structure</keyword>
<keyword id="KW-0025">Alternative splicing</keyword>
<keyword id="KW-1003">Cell membrane</keyword>
<keyword id="KW-1015">Disulfide bond</keyword>
<keyword id="KW-0325">Glycoprotein</keyword>
<keyword id="KW-0393">Immunoglobulin domain</keyword>
<keyword id="KW-0472">Membrane</keyword>
<keyword id="KW-1267">Proteomics identification</keyword>
<keyword id="KW-0675">Receptor</keyword>
<keyword id="KW-1185">Reference proteome</keyword>
<keyword id="KW-0677">Repeat</keyword>
<keyword id="KW-0964">Secreted</keyword>
<keyword id="KW-0732">Signal</keyword>
<keyword id="KW-0812">Transmembrane</keyword>
<keyword id="KW-1133">Transmembrane helix</keyword>